<gene>
    <name type="primary">MT-CYB</name>
    <name type="synonym">COB</name>
    <name type="synonym">CYTB</name>
    <name type="synonym">MTCYB</name>
</gene>
<proteinExistence type="inferred from homology"/>
<geneLocation type="mitochondrion"/>
<dbReference type="EMBL" id="DQ072111">
    <property type="protein sequence ID" value="AAZ23218.1"/>
    <property type="molecule type" value="Genomic_DNA"/>
</dbReference>
<dbReference type="SMR" id="Q288H1"/>
<dbReference type="GO" id="GO:0005743">
    <property type="term" value="C:mitochondrial inner membrane"/>
    <property type="evidence" value="ECO:0007669"/>
    <property type="project" value="UniProtKB-SubCell"/>
</dbReference>
<dbReference type="GO" id="GO:0045275">
    <property type="term" value="C:respiratory chain complex III"/>
    <property type="evidence" value="ECO:0007669"/>
    <property type="project" value="InterPro"/>
</dbReference>
<dbReference type="GO" id="GO:0046872">
    <property type="term" value="F:metal ion binding"/>
    <property type="evidence" value="ECO:0007669"/>
    <property type="project" value="UniProtKB-KW"/>
</dbReference>
<dbReference type="GO" id="GO:0008121">
    <property type="term" value="F:ubiquinol-cytochrome-c reductase activity"/>
    <property type="evidence" value="ECO:0007669"/>
    <property type="project" value="InterPro"/>
</dbReference>
<dbReference type="GO" id="GO:0006122">
    <property type="term" value="P:mitochondrial electron transport, ubiquinol to cytochrome c"/>
    <property type="evidence" value="ECO:0007669"/>
    <property type="project" value="TreeGrafter"/>
</dbReference>
<dbReference type="CDD" id="cd00290">
    <property type="entry name" value="cytochrome_b_C"/>
    <property type="match status" value="1"/>
</dbReference>
<dbReference type="CDD" id="cd00284">
    <property type="entry name" value="Cytochrome_b_N"/>
    <property type="match status" value="1"/>
</dbReference>
<dbReference type="FunFam" id="1.20.810.10:FF:000002">
    <property type="entry name" value="Cytochrome b"/>
    <property type="match status" value="1"/>
</dbReference>
<dbReference type="Gene3D" id="1.20.810.10">
    <property type="entry name" value="Cytochrome Bc1 Complex, Chain C"/>
    <property type="match status" value="1"/>
</dbReference>
<dbReference type="InterPro" id="IPR005798">
    <property type="entry name" value="Cyt_b/b6_C"/>
</dbReference>
<dbReference type="InterPro" id="IPR036150">
    <property type="entry name" value="Cyt_b/b6_C_sf"/>
</dbReference>
<dbReference type="InterPro" id="IPR005797">
    <property type="entry name" value="Cyt_b/b6_N"/>
</dbReference>
<dbReference type="InterPro" id="IPR027387">
    <property type="entry name" value="Cytb/b6-like_sf"/>
</dbReference>
<dbReference type="InterPro" id="IPR030689">
    <property type="entry name" value="Cytochrome_b"/>
</dbReference>
<dbReference type="InterPro" id="IPR048260">
    <property type="entry name" value="Cytochrome_b_C_euk/bac"/>
</dbReference>
<dbReference type="InterPro" id="IPR048259">
    <property type="entry name" value="Cytochrome_b_N_euk/bac"/>
</dbReference>
<dbReference type="InterPro" id="IPR016174">
    <property type="entry name" value="Di-haem_cyt_TM"/>
</dbReference>
<dbReference type="PANTHER" id="PTHR19271">
    <property type="entry name" value="CYTOCHROME B"/>
    <property type="match status" value="1"/>
</dbReference>
<dbReference type="PANTHER" id="PTHR19271:SF16">
    <property type="entry name" value="CYTOCHROME B"/>
    <property type="match status" value="1"/>
</dbReference>
<dbReference type="Pfam" id="PF00032">
    <property type="entry name" value="Cytochrom_B_C"/>
    <property type="match status" value="1"/>
</dbReference>
<dbReference type="Pfam" id="PF00033">
    <property type="entry name" value="Cytochrome_B"/>
    <property type="match status" value="1"/>
</dbReference>
<dbReference type="PIRSF" id="PIRSF038885">
    <property type="entry name" value="COB"/>
    <property type="match status" value="1"/>
</dbReference>
<dbReference type="SUPFAM" id="SSF81648">
    <property type="entry name" value="a domain/subunit of cytochrome bc1 complex (Ubiquinol-cytochrome c reductase)"/>
    <property type="match status" value="1"/>
</dbReference>
<dbReference type="SUPFAM" id="SSF81342">
    <property type="entry name" value="Transmembrane di-heme cytochromes"/>
    <property type="match status" value="1"/>
</dbReference>
<dbReference type="PROSITE" id="PS51003">
    <property type="entry name" value="CYTB_CTER"/>
    <property type="match status" value="1"/>
</dbReference>
<dbReference type="PROSITE" id="PS51002">
    <property type="entry name" value="CYTB_NTER"/>
    <property type="match status" value="1"/>
</dbReference>
<name>CYB_PETXN</name>
<evidence type="ECO:0000250" key="1"/>
<evidence type="ECO:0000250" key="2">
    <source>
        <dbReference type="UniProtKB" id="P00157"/>
    </source>
</evidence>
<evidence type="ECO:0000255" key="3">
    <source>
        <dbReference type="PROSITE-ProRule" id="PRU00967"/>
    </source>
</evidence>
<evidence type="ECO:0000255" key="4">
    <source>
        <dbReference type="PROSITE-ProRule" id="PRU00968"/>
    </source>
</evidence>
<sequence>MTNIRKTHPLIKIVNHSFIDLPTPSNISAWWNFGSLLGLCLVTQILTGLFLAMHYTSDTTTAFSSVTHICRDVNYGWLIRYLHANGASMFFICLYLHVGRGLYYGSYTYFETWNIGVILLFTVMATAFMGYVLPWGQMSFWGATVITNLLSAIPYIGTNLVEWIWGGLSVDKATLTRFFAFHFILPFIVAALAMIHLLFLHETGSNNPSGLISDSDKIPFHPYFTIKDILGVLLLILTLMILVLFSPDLLGDPDNYTPANPLNTPPHIKPEWYFLFAYAILRSIPNKLGGVLALVFSILILMLFPILHTSKQRGMMFRPLSQCLFWILAADLLTLTWIGGQPVEHPFIIIGQMASILYFTIILIVLPLISLLENKLLKW</sequence>
<feature type="chain" id="PRO_0000255118" description="Cytochrome b">
    <location>
        <begin position="1"/>
        <end position="379"/>
    </location>
</feature>
<feature type="transmembrane region" description="Helical" evidence="2">
    <location>
        <begin position="33"/>
        <end position="53"/>
    </location>
</feature>
<feature type="transmembrane region" description="Helical" evidence="2">
    <location>
        <begin position="77"/>
        <end position="98"/>
    </location>
</feature>
<feature type="transmembrane region" description="Helical" evidence="2">
    <location>
        <begin position="113"/>
        <end position="133"/>
    </location>
</feature>
<feature type="transmembrane region" description="Helical" evidence="2">
    <location>
        <begin position="178"/>
        <end position="198"/>
    </location>
</feature>
<feature type="transmembrane region" description="Helical" evidence="2">
    <location>
        <begin position="226"/>
        <end position="246"/>
    </location>
</feature>
<feature type="transmembrane region" description="Helical" evidence="2">
    <location>
        <begin position="288"/>
        <end position="308"/>
    </location>
</feature>
<feature type="transmembrane region" description="Helical" evidence="2">
    <location>
        <begin position="320"/>
        <end position="340"/>
    </location>
</feature>
<feature type="transmembrane region" description="Helical" evidence="2">
    <location>
        <begin position="347"/>
        <end position="367"/>
    </location>
</feature>
<feature type="binding site" description="axial binding residue" evidence="2">
    <location>
        <position position="83"/>
    </location>
    <ligand>
        <name>heme b</name>
        <dbReference type="ChEBI" id="CHEBI:60344"/>
        <label>b562</label>
    </ligand>
    <ligandPart>
        <name>Fe</name>
        <dbReference type="ChEBI" id="CHEBI:18248"/>
    </ligandPart>
</feature>
<feature type="binding site" description="axial binding residue" evidence="2">
    <location>
        <position position="97"/>
    </location>
    <ligand>
        <name>heme b</name>
        <dbReference type="ChEBI" id="CHEBI:60344"/>
        <label>b566</label>
    </ligand>
    <ligandPart>
        <name>Fe</name>
        <dbReference type="ChEBI" id="CHEBI:18248"/>
    </ligandPart>
</feature>
<feature type="binding site" description="axial binding residue" evidence="2">
    <location>
        <position position="182"/>
    </location>
    <ligand>
        <name>heme b</name>
        <dbReference type="ChEBI" id="CHEBI:60344"/>
        <label>b562</label>
    </ligand>
    <ligandPart>
        <name>Fe</name>
        <dbReference type="ChEBI" id="CHEBI:18248"/>
    </ligandPart>
</feature>
<feature type="binding site" description="axial binding residue" evidence="2">
    <location>
        <position position="196"/>
    </location>
    <ligand>
        <name>heme b</name>
        <dbReference type="ChEBI" id="CHEBI:60344"/>
        <label>b566</label>
    </ligand>
    <ligandPart>
        <name>Fe</name>
        <dbReference type="ChEBI" id="CHEBI:18248"/>
    </ligandPart>
</feature>
<feature type="binding site" evidence="2">
    <location>
        <position position="201"/>
    </location>
    <ligand>
        <name>a ubiquinone</name>
        <dbReference type="ChEBI" id="CHEBI:16389"/>
    </ligand>
</feature>
<accession>Q288H1</accession>
<keyword id="KW-0249">Electron transport</keyword>
<keyword id="KW-0349">Heme</keyword>
<keyword id="KW-0408">Iron</keyword>
<keyword id="KW-0472">Membrane</keyword>
<keyword id="KW-0479">Metal-binding</keyword>
<keyword id="KW-0496">Mitochondrion</keyword>
<keyword id="KW-0999">Mitochondrion inner membrane</keyword>
<keyword id="KW-0679">Respiratory chain</keyword>
<keyword id="KW-0812">Transmembrane</keyword>
<keyword id="KW-1133">Transmembrane helix</keyword>
<keyword id="KW-0813">Transport</keyword>
<keyword id="KW-0830">Ubiquinone</keyword>
<organism>
    <name type="scientific">Petaurista xanthotis</name>
    <name type="common">Chinese giant flying squirrel</name>
    <dbReference type="NCBI Taxonomy" id="238835"/>
    <lineage>
        <taxon>Eukaryota</taxon>
        <taxon>Metazoa</taxon>
        <taxon>Chordata</taxon>
        <taxon>Craniata</taxon>
        <taxon>Vertebrata</taxon>
        <taxon>Euteleostomi</taxon>
        <taxon>Mammalia</taxon>
        <taxon>Eutheria</taxon>
        <taxon>Euarchontoglires</taxon>
        <taxon>Glires</taxon>
        <taxon>Rodentia</taxon>
        <taxon>Sciuromorpha</taxon>
        <taxon>Sciuridae</taxon>
        <taxon>Sciurinae</taxon>
        <taxon>Pteromyini</taxon>
        <taxon>Petaurista</taxon>
    </lineage>
</organism>
<protein>
    <recommendedName>
        <fullName>Cytochrome b</fullName>
    </recommendedName>
    <alternativeName>
        <fullName>Complex III subunit 3</fullName>
    </alternativeName>
    <alternativeName>
        <fullName>Complex III subunit III</fullName>
    </alternativeName>
    <alternativeName>
        <fullName>Cytochrome b-c1 complex subunit 3</fullName>
    </alternativeName>
    <alternativeName>
        <fullName>Ubiquinol-cytochrome-c reductase complex cytochrome b subunit</fullName>
    </alternativeName>
</protein>
<comment type="function">
    <text evidence="2">Component of the ubiquinol-cytochrome c reductase complex (complex III or cytochrome b-c1 complex) that is part of the mitochondrial respiratory chain. The b-c1 complex mediates electron transfer from ubiquinol to cytochrome c. Contributes to the generation of a proton gradient across the mitochondrial membrane that is then used for ATP synthesis.</text>
</comment>
<comment type="cofactor">
    <cofactor evidence="2">
        <name>heme b</name>
        <dbReference type="ChEBI" id="CHEBI:60344"/>
    </cofactor>
    <text evidence="2">Binds 2 heme b groups non-covalently.</text>
</comment>
<comment type="subunit">
    <text evidence="2">The cytochrome bc1 complex contains 11 subunits: 3 respiratory subunits (MT-CYB, CYC1 and UQCRFS1), 2 core proteins (UQCRC1 and UQCRC2) and 6 low-molecular weight proteins (UQCRH/QCR6, UQCRB/QCR7, UQCRQ/QCR8, UQCR10/QCR9, UQCR11/QCR10 and a cleavage product of UQCRFS1). This cytochrome bc1 complex then forms a dimer.</text>
</comment>
<comment type="subcellular location">
    <subcellularLocation>
        <location evidence="2">Mitochondrion inner membrane</location>
        <topology evidence="2">Multi-pass membrane protein</topology>
    </subcellularLocation>
</comment>
<comment type="miscellaneous">
    <text evidence="1">Heme 1 (or BL or b562) is low-potential and absorbs at about 562 nm, and heme 2 (or BH or b566) is high-potential and absorbs at about 566 nm.</text>
</comment>
<comment type="similarity">
    <text evidence="3 4">Belongs to the cytochrome b family.</text>
</comment>
<comment type="caution">
    <text evidence="2">The full-length protein contains only eight transmembrane helices, not nine as predicted by bioinformatics tools.</text>
</comment>
<reference key="1">
    <citation type="journal article" date="2006" name="Mol. Phylogenet. Evol.">
        <title>Phylogeny and biogeography of the Petaurista philippensis complex (Rodentia: Sciuridae), inter- and intraspecific relationships inferred from molecular and morphometric analysis.</title>
        <authorList>
            <person name="Yu F."/>
            <person name="Yu F."/>
            <person name="Pang J."/>
            <person name="Kilpatrick C.W."/>
            <person name="McGuire P.M."/>
            <person name="Wang Y."/>
            <person name="Lu S."/>
            <person name="Woods C.A."/>
        </authorList>
    </citation>
    <scope>NUCLEOTIDE SEQUENCE [GENOMIC DNA]</scope>
    <source>
        <tissue>Skin</tissue>
    </source>
</reference>